<evidence type="ECO:0000250" key="1"/>
<evidence type="ECO:0000250" key="2">
    <source>
        <dbReference type="UniProtKB" id="Q9VAM6"/>
    </source>
</evidence>
<evidence type="ECO:0000255" key="3"/>
<evidence type="ECO:0000305" key="4"/>
<reference key="1">
    <citation type="journal article" date="2007" name="Nature">
        <title>Evolution of genes and genomes on the Drosophila phylogeny.</title>
        <authorList>
            <consortium name="Drosophila 12 genomes consortium"/>
        </authorList>
    </citation>
    <scope>NUCLEOTIDE SEQUENCE [LARGE SCALE GENOMIC DNA]</scope>
</reference>
<protein>
    <recommendedName>
        <fullName>CDGSH iron-sulfur domain-containing protein 2 homolog</fullName>
    </recommendedName>
</protein>
<organism>
    <name type="scientific">Drosophila simulans</name>
    <name type="common">Fruit fly</name>
    <dbReference type="NCBI Taxonomy" id="7240"/>
    <lineage>
        <taxon>Eukaryota</taxon>
        <taxon>Metazoa</taxon>
        <taxon>Ecdysozoa</taxon>
        <taxon>Arthropoda</taxon>
        <taxon>Hexapoda</taxon>
        <taxon>Insecta</taxon>
        <taxon>Pterygota</taxon>
        <taxon>Neoptera</taxon>
        <taxon>Endopterygota</taxon>
        <taxon>Diptera</taxon>
        <taxon>Brachycera</taxon>
        <taxon>Muscomorpha</taxon>
        <taxon>Ephydroidea</taxon>
        <taxon>Drosophilidae</taxon>
        <taxon>Drosophila</taxon>
        <taxon>Sophophora</taxon>
    </lineage>
</organism>
<sequence>MEPISHLVKSSLPNYLSSLPVPDSIGGWFKLSFKDWLALIPPTVVVAGIGYTAYLAYCPAARASCSAKISGRCNNQIRKNEPKVVDMIDVEDIAEKAAFCRCWKTKNWPYCDGSHGEHNKQTGDNVGPIVIKK</sequence>
<dbReference type="EMBL" id="CM000364">
    <property type="protein sequence ID" value="EDX14826.1"/>
    <property type="molecule type" value="Genomic_DNA"/>
</dbReference>
<dbReference type="SMR" id="B4QZI8"/>
<dbReference type="STRING" id="7240.B4QZI8"/>
<dbReference type="EnsemblMetazoa" id="FBtr0217816">
    <property type="protein sequence ID" value="FBpp0216308"/>
    <property type="gene ID" value="FBgn0189452"/>
</dbReference>
<dbReference type="EnsemblMetazoa" id="XM_002105287.4">
    <property type="protein sequence ID" value="XP_002105323.1"/>
    <property type="gene ID" value="LOC6730030"/>
</dbReference>
<dbReference type="GeneID" id="6730030"/>
<dbReference type="KEGG" id="dsi:Dsimw501_GD17906"/>
<dbReference type="CTD" id="493856"/>
<dbReference type="HOGENOM" id="CLU_132293_1_0_1"/>
<dbReference type="OMA" id="QIRKHEP"/>
<dbReference type="OrthoDB" id="449252at2759"/>
<dbReference type="PhylomeDB" id="B4QZI8"/>
<dbReference type="Proteomes" id="UP000000304">
    <property type="component" value="Chromosome 3R"/>
</dbReference>
<dbReference type="Bgee" id="FBgn0189452">
    <property type="expression patterns" value="Expressed in adult organism and 3 other cell types or tissues"/>
</dbReference>
<dbReference type="GO" id="GO:0005789">
    <property type="term" value="C:endoplasmic reticulum membrane"/>
    <property type="evidence" value="ECO:0007669"/>
    <property type="project" value="UniProtKB-SubCell"/>
</dbReference>
<dbReference type="GO" id="GO:0005741">
    <property type="term" value="C:mitochondrial outer membrane"/>
    <property type="evidence" value="ECO:0007669"/>
    <property type="project" value="EnsemblMetazoa"/>
</dbReference>
<dbReference type="GO" id="GO:0051537">
    <property type="term" value="F:2 iron, 2 sulfur cluster binding"/>
    <property type="evidence" value="ECO:0007669"/>
    <property type="project" value="UniProtKB-KW"/>
</dbReference>
<dbReference type="GO" id="GO:0046872">
    <property type="term" value="F:metal ion binding"/>
    <property type="evidence" value="ECO:0007669"/>
    <property type="project" value="UniProtKB-KW"/>
</dbReference>
<dbReference type="GO" id="GO:0006879">
    <property type="term" value="P:intracellular iron ion homeostasis"/>
    <property type="evidence" value="ECO:0007669"/>
    <property type="project" value="EnsemblMetazoa"/>
</dbReference>
<dbReference type="GO" id="GO:0006839">
    <property type="term" value="P:mitochondrial transport"/>
    <property type="evidence" value="ECO:0007669"/>
    <property type="project" value="EnsemblMetazoa"/>
</dbReference>
<dbReference type="GO" id="GO:0010506">
    <property type="term" value="P:regulation of autophagy"/>
    <property type="evidence" value="ECO:0007669"/>
    <property type="project" value="InterPro"/>
</dbReference>
<dbReference type="Gene3D" id="3.40.5.90">
    <property type="entry name" value="CDGSH iron-sulfur domain, mitoNEET-type"/>
    <property type="match status" value="1"/>
</dbReference>
<dbReference type="InterPro" id="IPR045131">
    <property type="entry name" value="CISD1/2"/>
</dbReference>
<dbReference type="InterPro" id="IPR018967">
    <property type="entry name" value="FeS-contain_CDGSH-typ"/>
</dbReference>
<dbReference type="InterPro" id="IPR019610">
    <property type="entry name" value="FeS-contain_mitoNEET_N"/>
</dbReference>
<dbReference type="InterPro" id="IPR042216">
    <property type="entry name" value="MitoNEET_CISD"/>
</dbReference>
<dbReference type="PANTHER" id="PTHR13680">
    <property type="entry name" value="CDGSH IRON-SULFUR DOMAIN-CONTAINING PROTEIN 1"/>
    <property type="match status" value="1"/>
</dbReference>
<dbReference type="PANTHER" id="PTHR13680:SF5">
    <property type="entry name" value="CDGSH IRON-SULFUR DOMAIN-CONTAINING PROTEIN 1"/>
    <property type="match status" value="1"/>
</dbReference>
<dbReference type="Pfam" id="PF10660">
    <property type="entry name" value="MitoNEET_N"/>
    <property type="match status" value="1"/>
</dbReference>
<dbReference type="Pfam" id="PF09360">
    <property type="entry name" value="zf-CDGSH"/>
    <property type="match status" value="1"/>
</dbReference>
<dbReference type="SMART" id="SM00704">
    <property type="entry name" value="ZnF_CDGSH"/>
    <property type="match status" value="1"/>
</dbReference>
<proteinExistence type="inferred from homology"/>
<keyword id="KW-0001">2Fe-2S</keyword>
<keyword id="KW-0256">Endoplasmic reticulum</keyword>
<keyword id="KW-0408">Iron</keyword>
<keyword id="KW-0411">Iron-sulfur</keyword>
<keyword id="KW-0472">Membrane</keyword>
<keyword id="KW-0479">Metal-binding</keyword>
<keyword id="KW-1185">Reference proteome</keyword>
<keyword id="KW-0812">Transmembrane</keyword>
<keyword id="KW-1133">Transmembrane helix</keyword>
<gene>
    <name evidence="2" type="primary">Cisd2</name>
    <name type="ORF">GD17906</name>
</gene>
<comment type="cofactor">
    <cofactor evidence="1">
        <name>[2Fe-2S] cluster</name>
        <dbReference type="ChEBI" id="CHEBI:190135"/>
    </cofactor>
    <text evidence="1">Binds 1 [2Fe-2S] cluster.</text>
</comment>
<comment type="subcellular location">
    <subcellularLocation>
        <location evidence="4">Endoplasmic reticulum membrane</location>
        <topology evidence="4">Single-pass membrane protein</topology>
    </subcellularLocation>
</comment>
<comment type="similarity">
    <text evidence="4">Belongs to the CISD protein family. CISD2 subfamily.</text>
</comment>
<feature type="chain" id="PRO_0000392029" description="CDGSH iron-sulfur domain-containing protein 2 homolog">
    <location>
        <begin position="1"/>
        <end position="133"/>
    </location>
</feature>
<feature type="topological domain" description="Lumenal" evidence="3">
    <location>
        <begin position="1"/>
        <end position="35"/>
    </location>
</feature>
<feature type="transmembrane region" description="Helical" evidence="3">
    <location>
        <begin position="36"/>
        <end position="58"/>
    </location>
</feature>
<feature type="topological domain" description="Cytoplasmic" evidence="3">
    <location>
        <begin position="59"/>
        <end position="133"/>
    </location>
</feature>
<feature type="binding site" evidence="1">
    <location>
        <position position="100"/>
    </location>
    <ligand>
        <name>[2Fe-2S] cluster</name>
        <dbReference type="ChEBI" id="CHEBI:190135"/>
    </ligand>
</feature>
<feature type="binding site" evidence="1">
    <location>
        <position position="102"/>
    </location>
    <ligand>
        <name>[2Fe-2S] cluster</name>
        <dbReference type="ChEBI" id="CHEBI:190135"/>
    </ligand>
</feature>
<feature type="binding site" evidence="1">
    <location>
        <position position="111"/>
    </location>
    <ligand>
        <name>[2Fe-2S] cluster</name>
        <dbReference type="ChEBI" id="CHEBI:190135"/>
    </ligand>
</feature>
<feature type="binding site" evidence="1">
    <location>
        <position position="115"/>
    </location>
    <ligand>
        <name>[2Fe-2S] cluster</name>
        <dbReference type="ChEBI" id="CHEBI:190135"/>
    </ligand>
</feature>
<name>CISD2_DROSI</name>
<accession>B4QZI8</accession>